<dbReference type="EC" id="3.1.21.10" evidence="1"/>
<dbReference type="EMBL" id="AJ749949">
    <property type="protein sequence ID" value="CAG45289.1"/>
    <property type="status" value="ALT_INIT"/>
    <property type="molecule type" value="Genomic_DNA"/>
</dbReference>
<dbReference type="RefSeq" id="WP_003026245.1">
    <property type="nucleotide sequence ID" value="NZ_CP010290.1"/>
</dbReference>
<dbReference type="RefSeq" id="YP_169674.1">
    <property type="nucleotide sequence ID" value="NC_006570.2"/>
</dbReference>
<dbReference type="SMR" id="Q5NH18"/>
<dbReference type="IntAct" id="Q5NH18">
    <property type="interactions" value="2"/>
</dbReference>
<dbReference type="STRING" id="177416.FTT_0656"/>
<dbReference type="DNASU" id="3192532"/>
<dbReference type="EnsemblBacteria" id="CAG45289">
    <property type="protein sequence ID" value="CAG45289"/>
    <property type="gene ID" value="FTT_0656"/>
</dbReference>
<dbReference type="GeneID" id="75265238"/>
<dbReference type="KEGG" id="ftu:FTT_0656"/>
<dbReference type="eggNOG" id="COG0817">
    <property type="taxonomic scope" value="Bacteria"/>
</dbReference>
<dbReference type="OrthoDB" id="9805499at2"/>
<dbReference type="Proteomes" id="UP000001174">
    <property type="component" value="Chromosome"/>
</dbReference>
<dbReference type="GO" id="GO:0005737">
    <property type="term" value="C:cytoplasm"/>
    <property type="evidence" value="ECO:0007669"/>
    <property type="project" value="UniProtKB-SubCell"/>
</dbReference>
<dbReference type="GO" id="GO:0048476">
    <property type="term" value="C:Holliday junction resolvase complex"/>
    <property type="evidence" value="ECO:0007669"/>
    <property type="project" value="UniProtKB-UniRule"/>
</dbReference>
<dbReference type="GO" id="GO:0008821">
    <property type="term" value="F:crossover junction DNA endonuclease activity"/>
    <property type="evidence" value="ECO:0007669"/>
    <property type="project" value="UniProtKB-UniRule"/>
</dbReference>
<dbReference type="GO" id="GO:0003677">
    <property type="term" value="F:DNA binding"/>
    <property type="evidence" value="ECO:0007669"/>
    <property type="project" value="UniProtKB-KW"/>
</dbReference>
<dbReference type="GO" id="GO:0000287">
    <property type="term" value="F:magnesium ion binding"/>
    <property type="evidence" value="ECO:0007669"/>
    <property type="project" value="UniProtKB-UniRule"/>
</dbReference>
<dbReference type="GO" id="GO:0006310">
    <property type="term" value="P:DNA recombination"/>
    <property type="evidence" value="ECO:0007669"/>
    <property type="project" value="UniProtKB-UniRule"/>
</dbReference>
<dbReference type="GO" id="GO:0006281">
    <property type="term" value="P:DNA repair"/>
    <property type="evidence" value="ECO:0007669"/>
    <property type="project" value="UniProtKB-UniRule"/>
</dbReference>
<dbReference type="CDD" id="cd16962">
    <property type="entry name" value="RuvC"/>
    <property type="match status" value="1"/>
</dbReference>
<dbReference type="FunFam" id="3.30.420.10:FF:000002">
    <property type="entry name" value="Crossover junction endodeoxyribonuclease RuvC"/>
    <property type="match status" value="1"/>
</dbReference>
<dbReference type="Gene3D" id="3.30.420.10">
    <property type="entry name" value="Ribonuclease H-like superfamily/Ribonuclease H"/>
    <property type="match status" value="1"/>
</dbReference>
<dbReference type="HAMAP" id="MF_00034">
    <property type="entry name" value="RuvC"/>
    <property type="match status" value="1"/>
</dbReference>
<dbReference type="InterPro" id="IPR012337">
    <property type="entry name" value="RNaseH-like_sf"/>
</dbReference>
<dbReference type="InterPro" id="IPR036397">
    <property type="entry name" value="RNaseH_sf"/>
</dbReference>
<dbReference type="InterPro" id="IPR020563">
    <property type="entry name" value="X-over_junc_endoDNase_Mg_BS"/>
</dbReference>
<dbReference type="InterPro" id="IPR002176">
    <property type="entry name" value="X-over_junc_endoDNase_RuvC"/>
</dbReference>
<dbReference type="NCBIfam" id="NF000711">
    <property type="entry name" value="PRK00039.2-1"/>
    <property type="match status" value="1"/>
</dbReference>
<dbReference type="NCBIfam" id="TIGR00228">
    <property type="entry name" value="ruvC"/>
    <property type="match status" value="1"/>
</dbReference>
<dbReference type="PANTHER" id="PTHR30194">
    <property type="entry name" value="CROSSOVER JUNCTION ENDODEOXYRIBONUCLEASE RUVC"/>
    <property type="match status" value="1"/>
</dbReference>
<dbReference type="PANTHER" id="PTHR30194:SF3">
    <property type="entry name" value="CROSSOVER JUNCTION ENDODEOXYRIBONUCLEASE RUVC"/>
    <property type="match status" value="1"/>
</dbReference>
<dbReference type="Pfam" id="PF02075">
    <property type="entry name" value="RuvC"/>
    <property type="match status" value="1"/>
</dbReference>
<dbReference type="PRINTS" id="PR00696">
    <property type="entry name" value="RSOLVASERUVC"/>
</dbReference>
<dbReference type="SUPFAM" id="SSF53098">
    <property type="entry name" value="Ribonuclease H-like"/>
    <property type="match status" value="1"/>
</dbReference>
<dbReference type="PROSITE" id="PS01321">
    <property type="entry name" value="RUVC"/>
    <property type="match status" value="1"/>
</dbReference>
<name>RUVC_FRATT</name>
<organism>
    <name type="scientific">Francisella tularensis subsp. tularensis (strain SCHU S4 / Schu 4)</name>
    <dbReference type="NCBI Taxonomy" id="177416"/>
    <lineage>
        <taxon>Bacteria</taxon>
        <taxon>Pseudomonadati</taxon>
        <taxon>Pseudomonadota</taxon>
        <taxon>Gammaproteobacteria</taxon>
        <taxon>Thiotrichales</taxon>
        <taxon>Francisellaceae</taxon>
        <taxon>Francisella</taxon>
    </lineage>
</organism>
<gene>
    <name evidence="1" type="primary">ruvC</name>
    <name type="ordered locus">FTT_0656</name>
</gene>
<reference key="1">
    <citation type="journal article" date="2005" name="Nat. Genet.">
        <title>The complete genome sequence of Francisella tularensis, the causative agent of tularemia.</title>
        <authorList>
            <person name="Larsson P."/>
            <person name="Oyston P.C.F."/>
            <person name="Chain P."/>
            <person name="Chu M.C."/>
            <person name="Duffield M."/>
            <person name="Fuxelius H.-H."/>
            <person name="Garcia E."/>
            <person name="Haelltorp G."/>
            <person name="Johansson D."/>
            <person name="Isherwood K.E."/>
            <person name="Karp P.D."/>
            <person name="Larsson E."/>
            <person name="Liu Y."/>
            <person name="Michell S."/>
            <person name="Prior J."/>
            <person name="Prior R."/>
            <person name="Malfatti S."/>
            <person name="Sjoestedt A."/>
            <person name="Svensson K."/>
            <person name="Thompson N."/>
            <person name="Vergez L."/>
            <person name="Wagg J.K."/>
            <person name="Wren B.W."/>
            <person name="Lindler L.E."/>
            <person name="Andersson S.G.E."/>
            <person name="Forsman M."/>
            <person name="Titball R.W."/>
        </authorList>
    </citation>
    <scope>NUCLEOTIDE SEQUENCE [LARGE SCALE GENOMIC DNA]</scope>
    <source>
        <strain>SCHU S4 / Schu 4</strain>
    </source>
</reference>
<sequence>MVILGIDPGSRITGFGVIKVQDNKIYYVASGCIRITEITTPKRLKQIADGITQIINIYAPTEAAIEQIFMFQNPMGAIKLGQARGVAMCTLAINNLEVSEYSAKQIKQAVVGTGGAAKSQVQHMVQSLLGLSKKPPEDAADALAIAICHYHSSKSLAKISGASRVSQKRIK</sequence>
<feature type="chain" id="PRO_0000225145" description="Crossover junction endodeoxyribonuclease RuvC">
    <location>
        <begin position="1"/>
        <end position="171"/>
    </location>
</feature>
<feature type="active site" evidence="1">
    <location>
        <position position="7"/>
    </location>
</feature>
<feature type="active site" evidence="1">
    <location>
        <position position="66"/>
    </location>
</feature>
<feature type="active site" evidence="1">
    <location>
        <position position="138"/>
    </location>
</feature>
<feature type="binding site" evidence="1">
    <location>
        <position position="7"/>
    </location>
    <ligand>
        <name>Mg(2+)</name>
        <dbReference type="ChEBI" id="CHEBI:18420"/>
        <label>1</label>
    </ligand>
</feature>
<feature type="binding site" evidence="1">
    <location>
        <position position="66"/>
    </location>
    <ligand>
        <name>Mg(2+)</name>
        <dbReference type="ChEBI" id="CHEBI:18420"/>
        <label>2</label>
    </ligand>
</feature>
<feature type="binding site" evidence="1">
    <location>
        <position position="138"/>
    </location>
    <ligand>
        <name>Mg(2+)</name>
        <dbReference type="ChEBI" id="CHEBI:18420"/>
        <label>1</label>
    </ligand>
</feature>
<comment type="function">
    <text evidence="1">The RuvA-RuvB-RuvC complex processes Holliday junction (HJ) DNA during genetic recombination and DNA repair. Endonuclease that resolves HJ intermediates. Cleaves cruciform DNA by making single-stranded nicks across the HJ at symmetrical positions within the homologous arms, yielding a 5'-phosphate and a 3'-hydroxyl group; requires a central core of homology in the junction. The consensus cleavage sequence is 5'-(A/T)TT(C/G)-3'. Cleavage occurs on the 3'-side of the TT dinucleotide at the point of strand exchange. HJ branch migration catalyzed by RuvA-RuvB allows RuvC to scan DNA until it finds its consensus sequence, where it cleaves and resolves the cruciform DNA.</text>
</comment>
<comment type="catalytic activity">
    <reaction evidence="1">
        <text>Endonucleolytic cleavage at a junction such as a reciprocal single-stranded crossover between two homologous DNA duplexes (Holliday junction).</text>
        <dbReference type="EC" id="3.1.21.10"/>
    </reaction>
</comment>
<comment type="cofactor">
    <cofactor evidence="1">
        <name>Mg(2+)</name>
        <dbReference type="ChEBI" id="CHEBI:18420"/>
    </cofactor>
    <text evidence="1">Binds 2 Mg(2+) ion per subunit.</text>
</comment>
<comment type="subunit">
    <text evidence="1">Homodimer which binds Holliday junction (HJ) DNA. The HJ becomes 2-fold symmetrical on binding to RuvC with unstacked arms; it has a different conformation from HJ DNA in complex with RuvA. In the full resolvosome a probable DNA-RuvA(4)-RuvB(12)-RuvC(2) complex forms which resolves the HJ.</text>
</comment>
<comment type="subcellular location">
    <subcellularLocation>
        <location evidence="1">Cytoplasm</location>
    </subcellularLocation>
</comment>
<comment type="similarity">
    <text evidence="1">Belongs to the RuvC family.</text>
</comment>
<comment type="sequence caution" evidence="2">
    <conflict type="erroneous initiation">
        <sequence resource="EMBL-CDS" id="CAG45289"/>
    </conflict>
    <text>Extended N-terminus.</text>
</comment>
<evidence type="ECO:0000255" key="1">
    <source>
        <dbReference type="HAMAP-Rule" id="MF_00034"/>
    </source>
</evidence>
<evidence type="ECO:0000305" key="2"/>
<accession>Q5NH18</accession>
<protein>
    <recommendedName>
        <fullName evidence="1">Crossover junction endodeoxyribonuclease RuvC</fullName>
        <ecNumber evidence="1">3.1.21.10</ecNumber>
    </recommendedName>
    <alternativeName>
        <fullName evidence="1">Holliday junction nuclease RuvC</fullName>
    </alternativeName>
    <alternativeName>
        <fullName evidence="1">Holliday junction resolvase RuvC</fullName>
    </alternativeName>
</protein>
<keyword id="KW-0963">Cytoplasm</keyword>
<keyword id="KW-0227">DNA damage</keyword>
<keyword id="KW-0233">DNA recombination</keyword>
<keyword id="KW-0234">DNA repair</keyword>
<keyword id="KW-0238">DNA-binding</keyword>
<keyword id="KW-0255">Endonuclease</keyword>
<keyword id="KW-0378">Hydrolase</keyword>
<keyword id="KW-0460">Magnesium</keyword>
<keyword id="KW-0479">Metal-binding</keyword>
<keyword id="KW-0540">Nuclease</keyword>
<keyword id="KW-1185">Reference proteome</keyword>
<proteinExistence type="inferred from homology"/>